<organism>
    <name type="scientific">Salmonella gallinarum (strain 287/91 / NCTC 13346)</name>
    <dbReference type="NCBI Taxonomy" id="550538"/>
    <lineage>
        <taxon>Bacteria</taxon>
        <taxon>Pseudomonadati</taxon>
        <taxon>Pseudomonadota</taxon>
        <taxon>Gammaproteobacteria</taxon>
        <taxon>Enterobacterales</taxon>
        <taxon>Enterobacteriaceae</taxon>
        <taxon>Salmonella</taxon>
    </lineage>
</organism>
<comment type="function">
    <text evidence="1">Catalyzes the NAD-dependent reduction of succinylglutamate semialdehyde into succinylglutamate.</text>
</comment>
<comment type="catalytic activity">
    <reaction evidence="1">
        <text>N-succinyl-L-glutamate 5-semialdehyde + NAD(+) + H2O = N-succinyl-L-glutamate + NADH + 2 H(+)</text>
        <dbReference type="Rhea" id="RHEA:10812"/>
        <dbReference type="ChEBI" id="CHEBI:15377"/>
        <dbReference type="ChEBI" id="CHEBI:15378"/>
        <dbReference type="ChEBI" id="CHEBI:57540"/>
        <dbReference type="ChEBI" id="CHEBI:57945"/>
        <dbReference type="ChEBI" id="CHEBI:58520"/>
        <dbReference type="ChEBI" id="CHEBI:58763"/>
        <dbReference type="EC" id="1.2.1.71"/>
    </reaction>
</comment>
<comment type="pathway">
    <text evidence="1">Amino-acid degradation; L-arginine degradation via AST pathway; L-glutamate and succinate from L-arginine: step 4/5.</text>
</comment>
<comment type="similarity">
    <text evidence="1">Belongs to the aldehyde dehydrogenase family. AstD subfamily.</text>
</comment>
<proteinExistence type="inferred from homology"/>
<dbReference type="EC" id="1.2.1.71" evidence="1"/>
<dbReference type="EMBL" id="AM933173">
    <property type="protein sequence ID" value="CAR37667.1"/>
    <property type="molecule type" value="Genomic_DNA"/>
</dbReference>
<dbReference type="RefSeq" id="WP_000177284.1">
    <property type="nucleotide sequence ID" value="NC_011274.1"/>
</dbReference>
<dbReference type="SMR" id="B5RAZ9"/>
<dbReference type="KEGG" id="seg:SG1811"/>
<dbReference type="HOGENOM" id="CLU_005391_1_0_6"/>
<dbReference type="UniPathway" id="UPA00185">
    <property type="reaction ID" value="UER00282"/>
</dbReference>
<dbReference type="Proteomes" id="UP000008321">
    <property type="component" value="Chromosome"/>
</dbReference>
<dbReference type="GO" id="GO:0043824">
    <property type="term" value="F:succinylglutamate-semialdehyde dehydrogenase activity"/>
    <property type="evidence" value="ECO:0007669"/>
    <property type="project" value="UniProtKB-EC"/>
</dbReference>
<dbReference type="GO" id="GO:0019544">
    <property type="term" value="P:arginine catabolic process to glutamate"/>
    <property type="evidence" value="ECO:0007669"/>
    <property type="project" value="UniProtKB-UniRule"/>
</dbReference>
<dbReference type="GO" id="GO:0019545">
    <property type="term" value="P:arginine catabolic process to succinate"/>
    <property type="evidence" value="ECO:0007669"/>
    <property type="project" value="UniProtKB-UniRule"/>
</dbReference>
<dbReference type="CDD" id="cd07095">
    <property type="entry name" value="ALDH_SGSD_AstD"/>
    <property type="match status" value="1"/>
</dbReference>
<dbReference type="FunFam" id="3.40.309.10:FF:000013">
    <property type="entry name" value="N-succinylglutamate 5-semialdehyde dehydrogenase"/>
    <property type="match status" value="1"/>
</dbReference>
<dbReference type="FunFam" id="3.40.605.10:FF:000010">
    <property type="entry name" value="N-succinylglutamate 5-semialdehyde dehydrogenase"/>
    <property type="match status" value="1"/>
</dbReference>
<dbReference type="Gene3D" id="3.40.605.10">
    <property type="entry name" value="Aldehyde Dehydrogenase, Chain A, domain 1"/>
    <property type="match status" value="1"/>
</dbReference>
<dbReference type="Gene3D" id="3.40.309.10">
    <property type="entry name" value="Aldehyde Dehydrogenase, Chain A, domain 2"/>
    <property type="match status" value="1"/>
</dbReference>
<dbReference type="HAMAP" id="MF_01174">
    <property type="entry name" value="Aldedh_AstD"/>
    <property type="match status" value="1"/>
</dbReference>
<dbReference type="InterPro" id="IPR016161">
    <property type="entry name" value="Ald_DH/histidinol_DH"/>
</dbReference>
<dbReference type="InterPro" id="IPR016163">
    <property type="entry name" value="Ald_DH_C"/>
</dbReference>
<dbReference type="InterPro" id="IPR016160">
    <property type="entry name" value="Ald_DH_CS_CYS"/>
</dbReference>
<dbReference type="InterPro" id="IPR029510">
    <property type="entry name" value="Ald_DH_CS_GLU"/>
</dbReference>
<dbReference type="InterPro" id="IPR016162">
    <property type="entry name" value="Ald_DH_N"/>
</dbReference>
<dbReference type="InterPro" id="IPR015590">
    <property type="entry name" value="Aldehyde_DH_dom"/>
</dbReference>
<dbReference type="InterPro" id="IPR017649">
    <property type="entry name" value="SuccinylGlu_semiald_DH_AstD"/>
</dbReference>
<dbReference type="NCBIfam" id="TIGR03240">
    <property type="entry name" value="arg_catab_astD"/>
    <property type="match status" value="1"/>
</dbReference>
<dbReference type="NCBIfam" id="NF006992">
    <property type="entry name" value="PRK09457.1"/>
    <property type="match status" value="1"/>
</dbReference>
<dbReference type="PANTHER" id="PTHR11699">
    <property type="entry name" value="ALDEHYDE DEHYDROGENASE-RELATED"/>
    <property type="match status" value="1"/>
</dbReference>
<dbReference type="Pfam" id="PF00171">
    <property type="entry name" value="Aldedh"/>
    <property type="match status" value="1"/>
</dbReference>
<dbReference type="SUPFAM" id="SSF53720">
    <property type="entry name" value="ALDH-like"/>
    <property type="match status" value="1"/>
</dbReference>
<dbReference type="PROSITE" id="PS00070">
    <property type="entry name" value="ALDEHYDE_DEHYDR_CYS"/>
    <property type="match status" value="1"/>
</dbReference>
<dbReference type="PROSITE" id="PS00687">
    <property type="entry name" value="ALDEHYDE_DEHYDR_GLU"/>
    <property type="match status" value="1"/>
</dbReference>
<protein>
    <recommendedName>
        <fullName evidence="1">N-succinylglutamate 5-semialdehyde dehydrogenase</fullName>
        <ecNumber evidence="1">1.2.1.71</ecNumber>
    </recommendedName>
    <alternativeName>
        <fullName evidence="1">Succinylglutamic semialdehyde dehydrogenase</fullName>
        <shortName evidence="1">SGSD</shortName>
    </alternativeName>
</protein>
<keyword id="KW-0056">Arginine metabolism</keyword>
<keyword id="KW-0520">NAD</keyword>
<keyword id="KW-0560">Oxidoreductase</keyword>
<gene>
    <name evidence="1" type="primary">astD</name>
    <name type="ordered locus">SG1811</name>
</gene>
<evidence type="ECO:0000255" key="1">
    <source>
        <dbReference type="HAMAP-Rule" id="MF_01174"/>
    </source>
</evidence>
<feature type="chain" id="PRO_1000138056" description="N-succinylglutamate 5-semialdehyde dehydrogenase">
    <location>
        <begin position="1"/>
        <end position="492"/>
    </location>
</feature>
<feature type="active site" evidence="1">
    <location>
        <position position="243"/>
    </location>
</feature>
<feature type="active site" evidence="1">
    <location>
        <position position="277"/>
    </location>
</feature>
<feature type="binding site" evidence="1">
    <location>
        <begin position="220"/>
        <end position="225"/>
    </location>
    <ligand>
        <name>NAD(+)</name>
        <dbReference type="ChEBI" id="CHEBI:57540"/>
    </ligand>
</feature>
<reference key="1">
    <citation type="journal article" date="2008" name="Genome Res.">
        <title>Comparative genome analysis of Salmonella enteritidis PT4 and Salmonella gallinarum 287/91 provides insights into evolutionary and host adaptation pathways.</title>
        <authorList>
            <person name="Thomson N.R."/>
            <person name="Clayton D.J."/>
            <person name="Windhorst D."/>
            <person name="Vernikos G."/>
            <person name="Davidson S."/>
            <person name="Churcher C."/>
            <person name="Quail M.A."/>
            <person name="Stevens M."/>
            <person name="Jones M.A."/>
            <person name="Watson M."/>
            <person name="Barron A."/>
            <person name="Layton A."/>
            <person name="Pickard D."/>
            <person name="Kingsley R.A."/>
            <person name="Bignell A."/>
            <person name="Clark L."/>
            <person name="Harris B."/>
            <person name="Ormond D."/>
            <person name="Abdellah Z."/>
            <person name="Brooks K."/>
            <person name="Cherevach I."/>
            <person name="Chillingworth T."/>
            <person name="Woodward J."/>
            <person name="Norberczak H."/>
            <person name="Lord A."/>
            <person name="Arrowsmith C."/>
            <person name="Jagels K."/>
            <person name="Moule S."/>
            <person name="Mungall K."/>
            <person name="Saunders M."/>
            <person name="Whitehead S."/>
            <person name="Chabalgoity J.A."/>
            <person name="Maskell D."/>
            <person name="Humphreys T."/>
            <person name="Roberts M."/>
            <person name="Barrow P.A."/>
            <person name="Dougan G."/>
            <person name="Parkhill J."/>
        </authorList>
    </citation>
    <scope>NUCLEOTIDE SEQUENCE [LARGE SCALE GENOMIC DNA]</scope>
    <source>
        <strain>287/91 / NCTC 13346</strain>
    </source>
</reference>
<accession>B5RAZ9</accession>
<name>ASTD_SALG2</name>
<sequence>MTLWINGDWITGQGERRRKTNPVSAEILWQGNDANAAQVAEACQVARAAFPRWARQPFAARQAIVEKFAALLEAHKAELTEVIARETGKPRWEAATEVTAMINKIAISIKAYHARTGEQKSELVDGAATLRHRPHGVLAVFGPYNFPGHLPNGHIVPALLAGNTLIFKPSELTPWTGETVIKLWERAGLPAGVLNLVQGGRETGQALSSLDDLDGLLFTGSASTGYQLHRQLSGQPEKILALEMGGNNPLIIEDVANTDAAVHLTLQSAFITAGQRCTCARRLLVKQGAQGDAFLARLVDVAGRLQPGRWDDDPQPFIGGLISAQAAQHVMEAWRQREALGGRTLLAPRKVKEGTSLLTPGIIELTGVADVPDEEVFGPLLNVWRYAHFDEAIRLANNTRFGLSCGLVSTDRAQFEQLLLEARAGIVNWNKPLTGAASTAPFGGIGASGNHRPSAWYAADYCAWPMASLESPELTLPATLSPGLDFSLREAV</sequence>